<organismHost>
    <name type="scientific">Acanthamoeba polyphaga</name>
    <name type="common">Amoeba</name>
    <dbReference type="NCBI Taxonomy" id="5757"/>
</organismHost>
<evidence type="ECO:0000255" key="1">
    <source>
        <dbReference type="PROSITE-ProRule" id="PRU00551"/>
    </source>
</evidence>
<accession>B4YNF3</accession>
<organism>
    <name type="scientific">Sputnik virophage</name>
    <dbReference type="NCBI Taxonomy" id="543939"/>
    <lineage>
        <taxon>Viruses</taxon>
        <taxon>Varidnaviria</taxon>
        <taxon>Bamfordvirae</taxon>
        <taxon>Preplasmiviricota</taxon>
        <taxon>Maveriviricetes</taxon>
        <taxon>Priklausovirales</taxon>
        <taxon>Lavidaviridae</taxon>
        <taxon>Sputnikvirus</taxon>
        <taxon>Mimivirus-dependent virus Sputnik</taxon>
    </lineage>
</organism>
<name>V13_SPTNK</name>
<sequence>MSKTQKTTVKAKKAKRIPVIELVEAISSKNLKRLLSAEGLDEVTRIQLSLYYRKIFKTTSNPLNNDEVGFIKVKYFHSDKLEDTGRVYAEKGRSLQSFKKAIRAFINNGINLDIDMKNSHPTLITQYCKKNKILCPFLDDYVRRREKRLEDVMVFHKISRDQAKELILRLCYLGSYKIPNDDGTSYKPKKTLEFLEKFKEEAEIIADRIAKKEKELYAKIKDNDDCKNKKAVILSVLAQQLEHSCLMEMYNFFTSKKIRVSTLCFDGMLINGINGNISDLLRECENFVYEQINYKINLEEKPMEHKLKFEVPIFSDYVDSDSDCQIKLFELVGKNKFKFCNGVLWVFDDQTGMFENSNHVVFRYLKRYKEYFNFIISTDDDGNHKTKNYATDEVLRKKIIGFIKDECQDNEWMLKTQTSSLGYLLFKDGIYNFNTSTFTEGFDPNIVFKFRVPWKFPKYDKELIKKAYKLSFGALFDNPKPFITSLACALAGEIKLKKIYFCPGKSNAGKSYLIKMLQYCFGDYIGTINGENISYNSKDSRDEAAKYRWAYLLANTRIVMSSEISMKKSIDGNMIKKFASAGDKIVGRKHCESEISFTPNFTIFCMFNDIPEIEPHDEAVSNRLVYHEFPYVFVKEEELNEKPYNKLKDEDLDSKYQTKDFASGFIHILLDAYKNYLENGLPEFDNEVKEKWTAQTKQIDKVTSIINEYYEVTNNVKDFVPLNEILKFKEQHKDLKTISKNRFNEILVEELKLKEGRSAKLRYWSGLKKRHFGDDINFE</sequence>
<reference key="1">
    <citation type="journal article" date="2008" name="Nature">
        <title>The virophage as a unique parasite of the giant mimivirus.</title>
        <authorList>
            <person name="La Scola B."/>
            <person name="Desnues C."/>
            <person name="Pagnier I."/>
            <person name="Robert C."/>
            <person name="Barrassi L."/>
            <person name="Fournous G."/>
            <person name="Merchat M."/>
            <person name="Suzan-Monti M."/>
            <person name="Forterre P."/>
            <person name="Koonin E."/>
            <person name="Raoult D."/>
        </authorList>
    </citation>
    <scope>NUCLEOTIDE SEQUENCE [GENOMIC DNA]</scope>
</reference>
<protein>
    <recommendedName>
        <fullName>Putative helicase V13</fullName>
        <ecNumber>3.6.4.-</ecNumber>
    </recommendedName>
</protein>
<dbReference type="EC" id="3.6.4.-"/>
<dbReference type="EMBL" id="EU606015">
    <property type="protein sequence ID" value="ACF16997.1"/>
    <property type="molecule type" value="Genomic_DNA"/>
</dbReference>
<dbReference type="RefSeq" id="YP_002122374.1">
    <property type="nucleotide sequence ID" value="NC_011132.1"/>
</dbReference>
<dbReference type="GeneID" id="6760342"/>
<dbReference type="KEGG" id="vg:6760342"/>
<dbReference type="OrthoDB" id="987at10239"/>
<dbReference type="Proteomes" id="UP000001863">
    <property type="component" value="Segment"/>
</dbReference>
<dbReference type="GO" id="GO:0005524">
    <property type="term" value="F:ATP binding"/>
    <property type="evidence" value="ECO:0007669"/>
    <property type="project" value="UniProtKB-KW"/>
</dbReference>
<dbReference type="GO" id="GO:0016787">
    <property type="term" value="F:hydrolase activity"/>
    <property type="evidence" value="ECO:0007669"/>
    <property type="project" value="UniProtKB-KW"/>
</dbReference>
<dbReference type="GO" id="GO:0006260">
    <property type="term" value="P:DNA replication"/>
    <property type="evidence" value="ECO:0007669"/>
    <property type="project" value="UniProtKB-KW"/>
</dbReference>
<dbReference type="Gene3D" id="3.40.50.300">
    <property type="entry name" value="P-loop containing nucleotide triphosphate hydrolases"/>
    <property type="match status" value="1"/>
</dbReference>
<dbReference type="InterPro" id="IPR014015">
    <property type="entry name" value="Helicase_SF3_DNA-vir"/>
</dbReference>
<dbReference type="InterPro" id="IPR027417">
    <property type="entry name" value="P-loop_NTPase"/>
</dbReference>
<dbReference type="InterPro" id="IPR051620">
    <property type="entry name" value="Viral_Helicase-Primase_Cplx"/>
</dbReference>
<dbReference type="PANTHER" id="PTHR35372">
    <property type="entry name" value="ATP BINDING PROTEIN-RELATED"/>
    <property type="match status" value="1"/>
</dbReference>
<dbReference type="PANTHER" id="PTHR35372:SF2">
    <property type="entry name" value="SF3 HELICASE DOMAIN-CONTAINING PROTEIN"/>
    <property type="match status" value="1"/>
</dbReference>
<dbReference type="SUPFAM" id="SSF52540">
    <property type="entry name" value="P-loop containing nucleoside triphosphate hydrolases"/>
    <property type="match status" value="1"/>
</dbReference>
<dbReference type="PROSITE" id="PS51206">
    <property type="entry name" value="SF3_HELICASE_1"/>
    <property type="match status" value="1"/>
</dbReference>
<proteinExistence type="predicted"/>
<keyword id="KW-0067">ATP-binding</keyword>
<keyword id="KW-0235">DNA replication</keyword>
<keyword id="KW-0378">Hydrolase</keyword>
<keyword id="KW-0547">Nucleotide-binding</keyword>
<keyword id="KW-1185">Reference proteome</keyword>
<feature type="chain" id="PRO_0000369821" description="Putative helicase V13">
    <location>
        <begin position="1"/>
        <end position="779"/>
    </location>
</feature>
<feature type="domain" description="SF3 helicase" evidence="1">
    <location>
        <begin position="477"/>
        <end position="642"/>
    </location>
</feature>
<feature type="binding site" evidence="1">
    <location>
        <begin position="504"/>
        <end position="511"/>
    </location>
    <ligand>
        <name>ATP</name>
        <dbReference type="ChEBI" id="CHEBI:30616"/>
    </ligand>
</feature>